<sequence>MNRLQQRQLFLENLLVGVNSTFHQMQKLSINTCCRSLQRILDHLILHQTIHSPAFRLDRMQLRQMQMLACLWIHQHNHDHQVILDAIKWISP</sequence>
<feature type="chain" id="PRO_0000369516" description="Non-structural protein 6">
    <location>
        <begin position="1"/>
        <end position="92"/>
    </location>
</feature>
<organism>
    <name type="scientific">Rotavirus A (strain RVA/Human/Indonesia/69M/1980/G8P4[10])</name>
    <name type="common">RV-A</name>
    <dbReference type="NCBI Taxonomy" id="10947"/>
    <lineage>
        <taxon>Viruses</taxon>
        <taxon>Riboviria</taxon>
        <taxon>Orthornavirae</taxon>
        <taxon>Duplornaviricota</taxon>
        <taxon>Resentoviricetes</taxon>
        <taxon>Reovirales</taxon>
        <taxon>Sedoreoviridae</taxon>
        <taxon>Rotavirus</taxon>
        <taxon>Rotavirus A</taxon>
    </lineage>
</organism>
<reference key="1">
    <citation type="journal article" date="2008" name="J. Virol.">
        <title>Group A human rotavirus genomics: evidence that gene constellations are influenced by viral protein interactions.</title>
        <authorList>
            <person name="Heiman E.M."/>
            <person name="McDonald S.M."/>
            <person name="Barro M."/>
            <person name="Taraporewala Z.F."/>
            <person name="Bar-Magen T."/>
            <person name="Patton J.T."/>
        </authorList>
    </citation>
    <scope>NUCLEOTIDE SEQUENCE [GENOMIC DNA]</scope>
</reference>
<keyword id="KW-1035">Host cytoplasm</keyword>
<keyword id="KW-1045">Host mitochondrion</keyword>
<comment type="subunit">
    <text evidence="1">Interacts with NSP2 and NSP5.</text>
</comment>
<comment type="subcellular location">
    <subcellularLocation>
        <location evidence="1">Host cytoplasm</location>
    </subcellularLocation>
    <subcellularLocation>
        <location evidence="1">Host mitochondrion</location>
    </subcellularLocation>
    <text evidence="1">Found in spherical cytoplasmic structures, called viral factories, that appear early after infection and are the site of viral replication and packaging.</text>
</comment>
<comment type="similarity">
    <text evidence="1">Belongs to the rotavirus A NSP6 family.</text>
</comment>
<dbReference type="EMBL" id="EF672562">
    <property type="protein sequence ID" value="ABV53235.1"/>
    <property type="molecule type" value="Genomic_DNA"/>
</dbReference>
<dbReference type="Proteomes" id="UP000001455">
    <property type="component" value="Genome"/>
</dbReference>
<dbReference type="GO" id="GO:0033650">
    <property type="term" value="C:host cell mitochondrion"/>
    <property type="evidence" value="ECO:0007669"/>
    <property type="project" value="UniProtKB-SubCell"/>
</dbReference>
<dbReference type="HAMAP" id="MF_04093">
    <property type="entry name" value="ROTA_NSP6"/>
    <property type="match status" value="1"/>
</dbReference>
<dbReference type="InterPro" id="IPR006950">
    <property type="entry name" value="Rotavirus_NSP6"/>
</dbReference>
<dbReference type="Pfam" id="PF04866">
    <property type="entry name" value="Rota_NS6"/>
    <property type="match status" value="1"/>
</dbReference>
<proteinExistence type="inferred from homology"/>
<organismHost>
    <name type="scientific">Homo sapiens</name>
    <name type="common">Human</name>
    <dbReference type="NCBI Taxonomy" id="9606"/>
</organismHost>
<accession>B3SRR0</accession>
<protein>
    <recommendedName>
        <fullName evidence="1">Non-structural protein 6</fullName>
        <shortName evidence="1">NSP6</shortName>
    </recommendedName>
</protein>
<name>NSP6_ROTH6</name>
<evidence type="ECO:0000255" key="1">
    <source>
        <dbReference type="HAMAP-Rule" id="MF_04093"/>
    </source>
</evidence>